<sequence length="110" mass="11838">MASLAALLPLLALLVLCRLDPAQAFVNQHLCGSHLVEALYLVCGERGFFYTPKSRREVEELQVGQAELGGGPGAGGLQPSALELALQKRGIVEQCCTSICSLYQLENYCN</sequence>
<gene>
    <name type="primary">INS</name>
</gene>
<proteinExistence type="evidence at protein level"/>
<organism>
    <name type="scientific">Oryctolagus cuniculus</name>
    <name type="common">Rabbit</name>
    <dbReference type="NCBI Taxonomy" id="9986"/>
    <lineage>
        <taxon>Eukaryota</taxon>
        <taxon>Metazoa</taxon>
        <taxon>Chordata</taxon>
        <taxon>Craniata</taxon>
        <taxon>Vertebrata</taxon>
        <taxon>Euteleostomi</taxon>
        <taxon>Mammalia</taxon>
        <taxon>Eutheria</taxon>
        <taxon>Euarchontoglires</taxon>
        <taxon>Glires</taxon>
        <taxon>Lagomorpha</taxon>
        <taxon>Leporidae</taxon>
        <taxon>Oryctolagus</taxon>
    </lineage>
</organism>
<reference key="1">
    <citation type="journal article" date="1994" name="J. Biol. Chem.">
        <title>Insulin gene expression and insulin synthesis in mammalian neuronal cells.</title>
        <authorList>
            <person name="Devaskar S.U."/>
            <person name="Giddings S.J."/>
            <person name="Rajakumar P.A."/>
            <person name="Carnaghi L.R."/>
            <person name="Menon R.K."/>
            <person name="Zahm D.S."/>
        </authorList>
    </citation>
    <scope>NUCLEOTIDE SEQUENCE [MRNA]</scope>
    <source>
        <strain>New Zealand white</strain>
        <tissue>Pancreas</tissue>
    </source>
</reference>
<reference key="2">
    <citation type="journal article" date="1966" name="Am. J. Med.">
        <title>Species variation in the amino acid sequence of insulin.</title>
        <authorList>
            <person name="Smith L.F."/>
        </authorList>
    </citation>
    <scope>PROTEIN SEQUENCE OF 25-54 AND 90-110</scope>
</reference>
<reference key="3">
    <citation type="submission" date="1991-04" db="EMBL/GenBank/DDBJ databases">
        <authorList>
            <person name="Giddings S.J."/>
            <person name="Carnaghi L.R."/>
            <person name="Devaskar S.U."/>
        </authorList>
    </citation>
    <scope>NUCLEOTIDE SEQUENCE [MRNA] OF 56-110</scope>
</reference>
<comment type="function">
    <text>Insulin decreases blood glucose concentration. It increases cell permeability to monosaccharides, amino acids and fatty acids. It accelerates glycolysis, the pentose phosphate cycle, and glycogen synthesis in liver.</text>
</comment>
<comment type="subunit">
    <text evidence="1">Heterodimer of a B chain and an A chain linked by two disulfide bonds.</text>
</comment>
<comment type="subcellular location">
    <subcellularLocation>
        <location>Secreted</location>
    </subcellularLocation>
</comment>
<comment type="similarity">
    <text evidence="4">Belongs to the insulin family.</text>
</comment>
<accession>P01311</accession>
<keyword id="KW-0119">Carbohydrate metabolism</keyword>
<keyword id="KW-0165">Cleavage on pair of basic residues</keyword>
<keyword id="KW-0903">Direct protein sequencing</keyword>
<keyword id="KW-1015">Disulfide bond</keyword>
<keyword id="KW-0313">Glucose metabolism</keyword>
<keyword id="KW-0372">Hormone</keyword>
<keyword id="KW-1185">Reference proteome</keyword>
<keyword id="KW-0964">Secreted</keyword>
<keyword id="KW-0732">Signal</keyword>
<protein>
    <recommendedName>
        <fullName>Insulin</fullName>
    </recommendedName>
    <component>
        <recommendedName>
            <fullName>Insulin B chain</fullName>
        </recommendedName>
    </component>
    <component>
        <recommendedName>
            <fullName>Insulin A chain</fullName>
        </recommendedName>
    </component>
</protein>
<dbReference type="EMBL" id="U03610">
    <property type="protein sequence ID" value="AAA19033.1"/>
    <property type="molecule type" value="mRNA"/>
</dbReference>
<dbReference type="EMBL" id="M61153">
    <property type="protein sequence ID" value="AAA17540.1"/>
    <property type="molecule type" value="mRNA"/>
</dbReference>
<dbReference type="PIR" id="A53438">
    <property type="entry name" value="INRB"/>
</dbReference>
<dbReference type="RefSeq" id="NP_001075804.1">
    <property type="nucleotide sequence ID" value="NM_001082335.1"/>
</dbReference>
<dbReference type="BMRB" id="P01311"/>
<dbReference type="SMR" id="P01311"/>
<dbReference type="FunCoup" id="P01311">
    <property type="interactions" value="89"/>
</dbReference>
<dbReference type="STRING" id="9986.ENSOCUP00000020463"/>
<dbReference type="PaxDb" id="9986-ENSOCUP00000020463"/>
<dbReference type="eggNOG" id="ENOG502S5P5">
    <property type="taxonomic scope" value="Eukaryota"/>
</dbReference>
<dbReference type="InParanoid" id="P01311"/>
<dbReference type="Proteomes" id="UP000001811">
    <property type="component" value="Unplaced"/>
</dbReference>
<dbReference type="GO" id="GO:0005615">
    <property type="term" value="C:extracellular space"/>
    <property type="evidence" value="ECO:0007669"/>
    <property type="project" value="TreeGrafter"/>
</dbReference>
<dbReference type="GO" id="GO:0005179">
    <property type="term" value="F:hormone activity"/>
    <property type="evidence" value="ECO:0007669"/>
    <property type="project" value="UniProtKB-KW"/>
</dbReference>
<dbReference type="GO" id="GO:0005158">
    <property type="term" value="F:insulin receptor binding"/>
    <property type="evidence" value="ECO:0007669"/>
    <property type="project" value="TreeGrafter"/>
</dbReference>
<dbReference type="GO" id="GO:1901701">
    <property type="term" value="P:cellular response to oxygen-containing compound"/>
    <property type="evidence" value="ECO:0007669"/>
    <property type="project" value="UniProtKB-ARBA"/>
</dbReference>
<dbReference type="GO" id="GO:0042593">
    <property type="term" value="P:glucose homeostasis"/>
    <property type="evidence" value="ECO:0007669"/>
    <property type="project" value="TreeGrafter"/>
</dbReference>
<dbReference type="GO" id="GO:0006006">
    <property type="term" value="P:glucose metabolic process"/>
    <property type="evidence" value="ECO:0007669"/>
    <property type="project" value="UniProtKB-KW"/>
</dbReference>
<dbReference type="GO" id="GO:0050714">
    <property type="term" value="P:positive regulation of protein secretion"/>
    <property type="evidence" value="ECO:0007669"/>
    <property type="project" value="TreeGrafter"/>
</dbReference>
<dbReference type="CDD" id="cd04367">
    <property type="entry name" value="IlGF_insulin_like"/>
    <property type="match status" value="1"/>
</dbReference>
<dbReference type="FunFam" id="1.10.100.10:FF:000003">
    <property type="entry name" value="Insulin"/>
    <property type="match status" value="1"/>
</dbReference>
<dbReference type="Gene3D" id="1.10.100.10">
    <property type="entry name" value="Insulin-like"/>
    <property type="match status" value="1"/>
</dbReference>
<dbReference type="InterPro" id="IPR004825">
    <property type="entry name" value="Insulin"/>
</dbReference>
<dbReference type="InterPro" id="IPR016179">
    <property type="entry name" value="Insulin-like"/>
</dbReference>
<dbReference type="InterPro" id="IPR036438">
    <property type="entry name" value="Insulin-like_sf"/>
</dbReference>
<dbReference type="InterPro" id="IPR022353">
    <property type="entry name" value="Insulin_CS"/>
</dbReference>
<dbReference type="InterPro" id="IPR022352">
    <property type="entry name" value="Insulin_family"/>
</dbReference>
<dbReference type="PANTHER" id="PTHR11454:SF9">
    <property type="entry name" value="INSULIN"/>
    <property type="match status" value="1"/>
</dbReference>
<dbReference type="PANTHER" id="PTHR11454">
    <property type="entry name" value="INSULIN/INSULIN GROWTH FACTOR"/>
    <property type="match status" value="1"/>
</dbReference>
<dbReference type="Pfam" id="PF00049">
    <property type="entry name" value="Insulin"/>
    <property type="match status" value="1"/>
</dbReference>
<dbReference type="PRINTS" id="PR00277">
    <property type="entry name" value="INSULIN"/>
</dbReference>
<dbReference type="PRINTS" id="PR00276">
    <property type="entry name" value="INSULINFAMLY"/>
</dbReference>
<dbReference type="SMART" id="SM00078">
    <property type="entry name" value="IlGF"/>
    <property type="match status" value="1"/>
</dbReference>
<dbReference type="SUPFAM" id="SSF56994">
    <property type="entry name" value="Insulin-like"/>
    <property type="match status" value="1"/>
</dbReference>
<dbReference type="PROSITE" id="PS00262">
    <property type="entry name" value="INSULIN"/>
    <property type="match status" value="1"/>
</dbReference>
<name>INS_RABIT</name>
<feature type="signal peptide" evidence="2">
    <location>
        <begin position="1"/>
        <end position="24"/>
    </location>
</feature>
<feature type="peptide" id="PRO_0000015892" description="Insulin B chain" evidence="3">
    <location>
        <begin position="25"/>
        <end position="54"/>
    </location>
</feature>
<feature type="propeptide" id="PRO_0000015893" description="C peptide">
    <location>
        <begin position="57"/>
        <end position="87"/>
    </location>
</feature>
<feature type="peptide" id="PRO_0000015894" description="Insulin A chain" evidence="3">
    <location>
        <begin position="90"/>
        <end position="110"/>
    </location>
</feature>
<feature type="disulfide bond" description="Interchain (between B and A chains)" evidence="1">
    <location>
        <begin position="31"/>
        <end position="96"/>
    </location>
</feature>
<feature type="disulfide bond" description="Interchain (between B and A chains)" evidence="1">
    <location>
        <begin position="43"/>
        <end position="109"/>
    </location>
</feature>
<feature type="disulfide bond" evidence="1">
    <location>
        <begin position="95"/>
        <end position="100"/>
    </location>
</feature>
<feature type="sequence conflict" description="In Ref. 3; AAA17540." evidence="4" ref="3">
    <original>E</original>
    <variation>Y</variation>
    <location>
        <position position="83"/>
    </location>
</feature>
<evidence type="ECO:0000250" key="1">
    <source>
        <dbReference type="UniProtKB" id="P01308"/>
    </source>
</evidence>
<evidence type="ECO:0000269" key="2">
    <source>
    </source>
</evidence>
<evidence type="ECO:0000269" key="3">
    <source>
    </source>
</evidence>
<evidence type="ECO:0000305" key="4"/>